<feature type="signal peptide" evidence="2">
    <location>
        <begin position="1"/>
        <end position="26"/>
    </location>
</feature>
<feature type="chain" id="PRO_0000460190" description="Inverse autotransporter adhesin YeeJ">
    <location>
        <begin position="27"/>
        <end position="2641"/>
    </location>
</feature>
<feature type="domain" description="LysM" evidence="4">
    <location>
        <begin position="50"/>
        <end position="98"/>
    </location>
</feature>
<feature type="domain" description="Big-1 1" evidence="3">
    <location>
        <begin position="617"/>
        <end position="711"/>
    </location>
</feature>
<feature type="domain" description="Big-1 2" evidence="3">
    <location>
        <begin position="721"/>
        <end position="815"/>
    </location>
</feature>
<feature type="domain" description="Big-1 3" evidence="3">
    <location>
        <begin position="822"/>
        <end position="913"/>
    </location>
</feature>
<feature type="domain" description="Big-1 4" evidence="3">
    <location>
        <begin position="920"/>
        <end position="1017"/>
    </location>
</feature>
<feature type="domain" description="Big-1 5" evidence="3">
    <location>
        <begin position="1024"/>
        <end position="1116"/>
    </location>
</feature>
<feature type="domain" description="Big-1 6" evidence="3">
    <location>
        <begin position="1123"/>
        <end position="1220"/>
    </location>
</feature>
<feature type="domain" description="Big-1 7" evidence="3">
    <location>
        <begin position="1227"/>
        <end position="1319"/>
    </location>
</feature>
<feature type="domain" description="Big-1 8" evidence="3">
    <location>
        <begin position="1326"/>
        <end position="1423"/>
    </location>
</feature>
<feature type="domain" description="Big-1 9" evidence="3">
    <location>
        <begin position="1430"/>
        <end position="1523"/>
    </location>
</feature>
<feature type="domain" description="Big-1 10" evidence="3">
    <location>
        <begin position="1531"/>
        <end position="1633"/>
    </location>
</feature>
<feature type="domain" description="Big-1 11" evidence="3">
    <location>
        <begin position="1641"/>
        <end position="1734"/>
    </location>
</feature>
<feature type="domain" description="Big-1 12" evidence="3">
    <location>
        <begin position="1741"/>
        <end position="1837"/>
    </location>
</feature>
<feature type="domain" description="Big-1 13" evidence="3">
    <location>
        <begin position="1844"/>
        <end position="1941"/>
    </location>
</feature>
<feature type="domain" description="Big-1 14" evidence="3">
    <location>
        <begin position="1948"/>
        <end position="2032"/>
    </location>
</feature>
<feature type="domain" description="Big-1 15" evidence="3">
    <location>
        <begin position="2048"/>
        <end position="2139"/>
    </location>
</feature>
<feature type="domain" description="Big-1 16" evidence="3">
    <location>
        <begin position="2142"/>
        <end position="2236"/>
    </location>
</feature>
<feature type="domain" description="Big-1 17" evidence="3">
    <location>
        <begin position="2244"/>
        <end position="2336"/>
    </location>
</feature>
<feature type="region of interest" description="Disordered" evidence="5">
    <location>
        <begin position="99"/>
        <end position="118"/>
    </location>
</feature>
<feature type="region of interest" description="Inverse autotransporter">
    <location>
        <begin position="125"/>
        <end position="400"/>
    </location>
</feature>
<feature type="region of interest" description="Invasin 3 domain">
    <location>
        <begin position="513"/>
        <end position="605"/>
    </location>
</feature>
<feature type="region of interest" description="C-type lectin domain">
    <location>
        <begin position="2538"/>
        <end position="2641"/>
    </location>
</feature>
<protein>
    <recommendedName>
        <fullName evidence="7">Inverse autotransporter adhesin YeeJ</fullName>
    </recommendedName>
</protein>
<sequence>MGIKLRRLTAGICLVTQLAFPMAAAAQGVVNAATPQPVPAQIAIANANTVPYILGALESAQSVAERFGISVAELRKLNQFRTFARGFDNVRQGDELDVPAQVSEKKLTPPPGNSSDNLEQQIASTSQQIGSLLAEDMNSEQAANMARGWASSQASGVMTDWLSRFGTARITLGVDEDFSLKNSQFDFLHPRYETPDNLFFSQHTLHRTDERTQINNGLGWRHFTPTWMSGINFFFDHDLSRYHSRAGIGAEYWRDYLKLSSNGYLRLTNWRSAPELDNDYEARPANGWDVRAEGWLPAWPHLGGKLVYEQYYGDEVALFDKDDRQSNPHAITAGLNYTPFPLMTFSAEQRQGKQGENDTRFAVDFTWQPGSAMQKQLDPNEVAARRSLAGSRYDLVDRNNNIVLEYRKKELVRLTLTDPVTGKSGEVKSLVSSLQTKYALKGYNVEATALEAAGGKVVTTGKDILVTLPGYRFTSTPETDNTWPIEVTAEDVKGNFSNREQSMVVVQAPALSQKDSSVSLSTQTLSADSHSTATLTFIAHDAAGNPVIGLVLSTRHEGVQDITLSDWKDNGDGSYTQVLTTGAMSGTLTLMPQLNGVDAAKAPAVVNIISVSSSRTHSSIKIDKDRYLSGNPIEVTVELRDENDKPVKEQKQQLNTAVSIDNVKPGVTTDWKETADGVYKATYTAYTKGSGLTAKLLMQNWNEDLHTAGFIIDANPQSAKIATLSASNNGVLANENAANTVSVNVADEGSNPINDHTVTFAVLNGSATSFNNQNTAKTDVNGLATFDLKSSKQEDNTVEVTLENGVKQTLIVSFVGDSSTAQVDLQKSKNEVVADGNDSATMTATVRDAKGNLLNDVKVTFNVNSAEAKLSQTEVNSHDGIATATLTSLKNGDYRVTASVSSGSQANQQVNFIGDQSTAALTLSVPSGDITVTNTAPQHMTATLQDKNGNPLKDKEITFTVPNDVASRFSISNGGKGMTDSNGVAIASLTGTLAGTHMITARLANSNVSDTQPMTFVADKDSAVVVLQTSKAEIIGNGVDETTLTATVKDPFDNVVKNLSVVFRTSPADTQLSLNTRNTNENGIAEVTLKGTVLGVHTAEAILLNGNRDTKTVNIAPDTSNAQVTLNIPAQQVVTNNSDSVQLTATVKDPSNHPVAGITVNFTMPQDVAANFTLENNGIAITQANGEAHVTLKGKKAGTHTVTATLGNNNASDAQPVTFVADKDSAVVVLQTSKAEIIGNGVDETTLTATVKDPFDNVVIDLPVTFSTNPADTQLSQSTSNTNDSGVAEVTLKGTVLGVHTAEATLPNGNNDTKTVNIAPDASNAQVTLNIPAQQVVTNNSDSVQLTATVKDPSNHPVAGITVNFTMPQDVAANFTLENNGIAITQANGEAHVTLKGKKAGTHTVTVTLSNNNTSDSQPVTFVADKTSAQVVLQISKNEITGNGVDSATLTATVKDQFDNEVNNLPVTFSTASSGLTLTPGESNTNESGIAQATLAGVAFGEQTVTASLANTGASDNKTVHFIGDTAAAKIIELTPVPDSIFAGTPQNSTGSVITATVVDNNGFPVKGVTVNFTSRTNSAEMTNGGQAVTNEQGKATVTYTNTRSSIESGARPDTVEASLENGSSTLSTSINVNADASTAHLTLLHALFDTVSAGETTSLYIEVKDNYGNGVPQHQVTLSVSPSEGVTPSNNGIYTTNYYGNFYASFTATKAGVYQVTATLENGDSMQQTVTYVPNVANAEISLAASKDPVIADNNDLTTLTATVADTEGNAIANTEVTFTLPEDVRANFTLSDGGKAITDTEGKAKVTLKGTKAGAHTVTASMAGGKSGQLVVNFTADTLTAQVNLNVTEDNFIANNVGMTTLQATVTDGNGNPLANEAVTFTLPADVSASFTLGQGGSAITDINGKAEVTLSGTKSGTYPVTVSVNNYGVSDTKQVTLIADAGTAKLTSLTSVYSFVVSTTEGATMTASVTDANGNPVEGIKVNFRGTSVTLSSTSVETDSQGFAEILVTSTEVGLKTVSASLADKPTEVISRLLNASADVNSATFTSLEIPEGQVMVAQDVAVKAHVNDQFGNPVAHQPVTFSAEPSSQMIISQNTVSTNTQGIAEVTMTPERNGSYMVKASLANGASIEKQLEAIDEKLTLTASSPLIGVNSPTGATLTATLTSANGTPVEGQVINFSVTPEGATLSGGKVRTNSSGQAPVVLTSNKVGTYTVTASFHNGVTIQTQTTVKVTGNSSTAHVASFIADPSTIAATNSDLSTLKATVEDGSGNLIEGLTVYFALKSGSATLTTLTAVTDQNGIATTSVKGAMTGSVTVSAVTTAGGMQTVDITLVAGPADASQSVLKNNRSSLKGDYTDSAELHLVLYDISGNPIKVSEGMEFVQSGTNVPYVKISAIDYSQNINGDYKATVTGGGEGIATLIPVLNGVHQAGLSTTIQFTRAEDKIMSGTVLVNGANLPTTTFPSQGFTGAYYQLNNDNFAPGKTAADYEFSSSGSWVDVDATGKVTFKNVGSKWERITATPKTGGPSYIYEIRVKSWWVNAGDAFMIYSLAENFCSSNGYTLPLGDHLNHSRSRGIGSLYSEWGDMGHYTTEAGFQSNMYWSSSPANSSEQYVISLATGEQSVYEKLGFAHATCYKNL</sequence>
<evidence type="ECO:0000250" key="1">
    <source>
        <dbReference type="UniProtKB" id="P76347"/>
    </source>
</evidence>
<evidence type="ECO:0000255" key="2"/>
<evidence type="ECO:0000255" key="3">
    <source>
        <dbReference type="PROSITE-ProRule" id="PRU00445"/>
    </source>
</evidence>
<evidence type="ECO:0000255" key="4">
    <source>
        <dbReference type="PROSITE-ProRule" id="PRU01118"/>
    </source>
</evidence>
<evidence type="ECO:0000256" key="5">
    <source>
        <dbReference type="SAM" id="MobiDB-lite"/>
    </source>
</evidence>
<evidence type="ECO:0000269" key="6">
    <source>
    </source>
</evidence>
<evidence type="ECO:0000303" key="7">
    <source>
    </source>
</evidence>
<evidence type="ECO:0000305" key="8"/>
<evidence type="ECO:0000305" key="9">
    <source>
    </source>
</evidence>
<evidence type="ECO:0000312" key="10">
    <source>
        <dbReference type="EMBL" id="CAR13505.1"/>
    </source>
</evidence>
<reference key="1">
    <citation type="journal article" date="2009" name="PLoS Genet.">
        <title>Organised genome dynamics in the Escherichia coli species results in highly diverse adaptive paths.</title>
        <authorList>
            <person name="Touchon M."/>
            <person name="Hoede C."/>
            <person name="Tenaillon O."/>
            <person name="Barbe V."/>
            <person name="Baeriswyl S."/>
            <person name="Bidet P."/>
            <person name="Bingen E."/>
            <person name="Bonacorsi S."/>
            <person name="Bouchier C."/>
            <person name="Bouvet O."/>
            <person name="Calteau A."/>
            <person name="Chiapello H."/>
            <person name="Clermont O."/>
            <person name="Cruveiller S."/>
            <person name="Danchin A."/>
            <person name="Diard M."/>
            <person name="Dossat C."/>
            <person name="Karoui M.E."/>
            <person name="Frapy E."/>
            <person name="Garry L."/>
            <person name="Ghigo J.M."/>
            <person name="Gilles A.M."/>
            <person name="Johnson J."/>
            <person name="Le Bouguenec C."/>
            <person name="Lescat M."/>
            <person name="Mangenot S."/>
            <person name="Martinez-Jehanne V."/>
            <person name="Matic I."/>
            <person name="Nassif X."/>
            <person name="Oztas S."/>
            <person name="Petit M.A."/>
            <person name="Pichon C."/>
            <person name="Rouy Z."/>
            <person name="Ruf C.S."/>
            <person name="Schneider D."/>
            <person name="Tourret J."/>
            <person name="Vacherie B."/>
            <person name="Vallenet D."/>
            <person name="Medigue C."/>
            <person name="Rocha E.P.C."/>
            <person name="Denamur E."/>
        </authorList>
    </citation>
    <scope>NUCLEOTIDE SEQUENCE [LARGE SCALE GENOMIC DNA]</scope>
    <source>
        <strain>UMN026 / ExPEC</strain>
    </source>
</reference>
<reference key="2">
    <citation type="journal article" date="2017" name="Sci. Rep.">
        <title>YeeJ is an inverse autotransporter from Escherichia coli that binds to peptidoglycan and promotes biofilm formation.</title>
        <authorList>
            <person name="Martinez-Gil M."/>
            <person name="Goh K.G.K."/>
            <person name="Rackaityte E."/>
            <person name="Sakamoto C."/>
            <person name="Audrain B."/>
            <person name="Moriel D.G."/>
            <person name="Totsika M."/>
            <person name="Ghigo J.M."/>
            <person name="Schembri M.A."/>
            <person name="Beloin C."/>
        </authorList>
    </citation>
    <scope>FUNCTION</scope>
    <scope>DOMAIN</scope>
    <source>
        <strain>UMN026 / ExPEC</strain>
    </source>
</reference>
<name>YEEJ_ECOLU</name>
<gene>
    <name evidence="7" type="primary">yeeJ</name>
    <name evidence="10" type="ordered locus">ECUMN_2317</name>
</gene>
<comment type="function">
    <text evidence="1 6">A probable inverse autotransporter, it may be involved in biofilm formation and cell adhesion. May bind peptidoglycan via its LysM domain (By similarity). Upon overexpression shows increased mature biofilm formation (PubMed:28900103).</text>
</comment>
<comment type="subcellular location">
    <subcellularLocation>
        <location evidence="1">Cell outer membrane</location>
    </subcellularLocation>
    <text evidence="1">The passenger domain (approximately residues 401-2641) is exposed on the cell surface, and may be processed and released to the extracellular milieu.</text>
</comment>
<comment type="domain">
    <text evidence="9">Has a signal sequence, a Lys M domain, an inverse autotransporter domain (residues 125-400) predicted to form a 12-stranded beta-barrel, followed by the passenger domain with an invasin 3 domain (residues 513-605), 17 Big-1 domains and a C-type lectin domain (resides 2538-2638).</text>
</comment>
<comment type="miscellaneous">
    <text evidence="8">'Inverse' autotransporters have an N-terminal translocation domain followed by the passenger domain, as opposed to 'classical' autotransporters which have N-terminal passenger and C-terminal translocation domains.</text>
</comment>
<comment type="similarity">
    <text evidence="8">Belongs to the intimin/invasin family.</text>
</comment>
<comment type="sequence caution" evidence="8">
    <conflict type="erroneous initiation">
        <sequence resource="EMBL-CDS" id="CAR13505"/>
    </conflict>
    <text>Extended N-terminus.</text>
</comment>
<accession>B7NC15</accession>
<organism>
    <name type="scientific">Escherichia coli O17:K52:H18 (strain UMN026 / ExPEC)</name>
    <dbReference type="NCBI Taxonomy" id="585056"/>
    <lineage>
        <taxon>Bacteria</taxon>
        <taxon>Pseudomonadati</taxon>
        <taxon>Pseudomonadota</taxon>
        <taxon>Gammaproteobacteria</taxon>
        <taxon>Enterobacterales</taxon>
        <taxon>Enterobacteriaceae</taxon>
        <taxon>Escherichia</taxon>
    </lineage>
</organism>
<keyword id="KW-0998">Cell outer membrane</keyword>
<keyword id="KW-0472">Membrane</keyword>
<keyword id="KW-0677">Repeat</keyword>
<keyword id="KW-0732">Signal</keyword>
<dbReference type="EMBL" id="CU928163">
    <property type="protein sequence ID" value="CAR13505.1"/>
    <property type="status" value="ALT_INIT"/>
    <property type="molecule type" value="Genomic_DNA"/>
</dbReference>
<dbReference type="SMR" id="B7NC15"/>
<dbReference type="STRING" id="585056.ECUMN_2317"/>
<dbReference type="KEGG" id="eum:ECUMN_2317"/>
<dbReference type="PATRIC" id="fig|585056.7.peg.2497"/>
<dbReference type="HOGENOM" id="CLU_000210_0_0_6"/>
<dbReference type="Proteomes" id="UP000007097">
    <property type="component" value="Chromosome"/>
</dbReference>
<dbReference type="GO" id="GO:0009279">
    <property type="term" value="C:cell outer membrane"/>
    <property type="evidence" value="ECO:0007669"/>
    <property type="project" value="UniProtKB-SubCell"/>
</dbReference>
<dbReference type="GO" id="GO:0043709">
    <property type="term" value="P:cell adhesion involved in single-species biofilm formation"/>
    <property type="evidence" value="ECO:0000314"/>
    <property type="project" value="UniProtKB"/>
</dbReference>
<dbReference type="FunFam" id="2.60.40.10:FF:000182">
    <property type="entry name" value="Gamma intimin"/>
    <property type="match status" value="7"/>
</dbReference>
<dbReference type="FunFam" id="2.40.160.160:FF:000001">
    <property type="entry name" value="Intimin-like inverse autotransporter SinH"/>
    <property type="match status" value="1"/>
</dbReference>
<dbReference type="FunFam" id="2.60.40.10:FF:002045">
    <property type="entry name" value="Putative adhesin"/>
    <property type="match status" value="1"/>
</dbReference>
<dbReference type="Gene3D" id="2.60.40.1080">
    <property type="match status" value="1"/>
</dbReference>
<dbReference type="Gene3D" id="2.60.40.10">
    <property type="entry name" value="Immunoglobulins"/>
    <property type="match status" value="19"/>
</dbReference>
<dbReference type="Gene3D" id="2.40.160.160">
    <property type="entry name" value="Inverse autotransporter, beta-domain"/>
    <property type="match status" value="1"/>
</dbReference>
<dbReference type="Gene3D" id="3.10.100.10">
    <property type="entry name" value="Mannose-Binding Protein A, subunit A"/>
    <property type="match status" value="1"/>
</dbReference>
<dbReference type="InterPro" id="IPR003344">
    <property type="entry name" value="Big_1_dom"/>
</dbReference>
<dbReference type="InterPro" id="IPR016186">
    <property type="entry name" value="C-type_lectin-like/link_sf"/>
</dbReference>
<dbReference type="InterPro" id="IPR024519">
    <property type="entry name" value="IAT_beta"/>
</dbReference>
<dbReference type="InterPro" id="IPR038177">
    <property type="entry name" value="IAT_beta_sf"/>
</dbReference>
<dbReference type="InterPro" id="IPR013783">
    <property type="entry name" value="Ig-like_fold"/>
</dbReference>
<dbReference type="InterPro" id="IPR051715">
    <property type="entry name" value="Intimin-Invasin_domain"/>
</dbReference>
<dbReference type="InterPro" id="IPR003535">
    <property type="entry name" value="Intimin/invasin_bac"/>
</dbReference>
<dbReference type="InterPro" id="IPR008964">
    <property type="entry name" value="Invasin/intimin_cell_adhesion"/>
</dbReference>
<dbReference type="InterPro" id="IPR015217">
    <property type="entry name" value="Invasin_dom_3"/>
</dbReference>
<dbReference type="InterPro" id="IPR018392">
    <property type="entry name" value="LysM_dom"/>
</dbReference>
<dbReference type="InterPro" id="IPR022409">
    <property type="entry name" value="PKD/Chitinase_dom"/>
</dbReference>
<dbReference type="PANTHER" id="PTHR39576:SF2">
    <property type="entry name" value="ATTACHING AND EFFACING PROTEIN HOMOLOG-RELATED"/>
    <property type="match status" value="1"/>
</dbReference>
<dbReference type="PANTHER" id="PTHR39576">
    <property type="entry name" value="ATTACHING AND EFFACING PROTEIN HOMOLOG-RELATED-RELATED"/>
    <property type="match status" value="1"/>
</dbReference>
<dbReference type="Pfam" id="PF02369">
    <property type="entry name" value="Big_1"/>
    <property type="match status" value="16"/>
</dbReference>
<dbReference type="Pfam" id="PF11924">
    <property type="entry name" value="IAT_beta"/>
    <property type="match status" value="1"/>
</dbReference>
<dbReference type="Pfam" id="PF09134">
    <property type="entry name" value="Invasin_D3"/>
    <property type="match status" value="1"/>
</dbReference>
<dbReference type="PRINTS" id="PR01369">
    <property type="entry name" value="INTIMIN"/>
</dbReference>
<dbReference type="SMART" id="SM00634">
    <property type="entry name" value="BID_1"/>
    <property type="match status" value="16"/>
</dbReference>
<dbReference type="SMART" id="SM00089">
    <property type="entry name" value="PKD"/>
    <property type="match status" value="6"/>
</dbReference>
<dbReference type="SUPFAM" id="SSF49373">
    <property type="entry name" value="Invasin/intimin cell-adhesion fragments"/>
    <property type="match status" value="20"/>
</dbReference>
<dbReference type="PROSITE" id="PS51127">
    <property type="entry name" value="BIG1"/>
    <property type="match status" value="17"/>
</dbReference>
<dbReference type="PROSITE" id="PS51782">
    <property type="entry name" value="LYSM"/>
    <property type="match status" value="1"/>
</dbReference>
<proteinExistence type="inferred from homology"/>